<name>RL16_BACTN</name>
<accession>Q8A483</accession>
<feature type="chain" id="PRO_0000062047" description="Large ribosomal subunit protein uL16">
    <location>
        <begin position="1"/>
        <end position="144"/>
    </location>
</feature>
<feature type="region of interest" description="Disordered" evidence="2">
    <location>
        <begin position="1"/>
        <end position="22"/>
    </location>
</feature>
<feature type="compositionally biased region" description="Basic residues" evidence="2">
    <location>
        <begin position="1"/>
        <end position="17"/>
    </location>
</feature>
<organism>
    <name type="scientific">Bacteroides thetaiotaomicron (strain ATCC 29148 / DSM 2079 / JCM 5827 / CCUG 10774 / NCTC 10582 / VPI-5482 / E50)</name>
    <dbReference type="NCBI Taxonomy" id="226186"/>
    <lineage>
        <taxon>Bacteria</taxon>
        <taxon>Pseudomonadati</taxon>
        <taxon>Bacteroidota</taxon>
        <taxon>Bacteroidia</taxon>
        <taxon>Bacteroidales</taxon>
        <taxon>Bacteroidaceae</taxon>
        <taxon>Bacteroides</taxon>
    </lineage>
</organism>
<protein>
    <recommendedName>
        <fullName evidence="1">Large ribosomal subunit protein uL16</fullName>
    </recommendedName>
    <alternativeName>
        <fullName evidence="3">50S ribosomal protein L16</fullName>
    </alternativeName>
</protein>
<evidence type="ECO:0000255" key="1">
    <source>
        <dbReference type="HAMAP-Rule" id="MF_01342"/>
    </source>
</evidence>
<evidence type="ECO:0000256" key="2">
    <source>
        <dbReference type="SAM" id="MobiDB-lite"/>
    </source>
</evidence>
<evidence type="ECO:0000305" key="3"/>
<dbReference type="EMBL" id="AE015928">
    <property type="protein sequence ID" value="AAO77826.1"/>
    <property type="molecule type" value="Genomic_DNA"/>
</dbReference>
<dbReference type="RefSeq" id="NP_811632.1">
    <property type="nucleotide sequence ID" value="NC_004663.1"/>
</dbReference>
<dbReference type="RefSeq" id="WP_002558067.1">
    <property type="nucleotide sequence ID" value="NZ_UYXG01000001.1"/>
</dbReference>
<dbReference type="SMR" id="Q8A483"/>
<dbReference type="FunCoup" id="Q8A483">
    <property type="interactions" value="537"/>
</dbReference>
<dbReference type="STRING" id="226186.BT_2720"/>
<dbReference type="PaxDb" id="226186-BT_2720"/>
<dbReference type="EnsemblBacteria" id="AAO77826">
    <property type="protein sequence ID" value="AAO77826"/>
    <property type="gene ID" value="BT_2720"/>
</dbReference>
<dbReference type="GeneID" id="69587580"/>
<dbReference type="KEGG" id="bth:BT_2720"/>
<dbReference type="PATRIC" id="fig|226186.12.peg.2763"/>
<dbReference type="eggNOG" id="COG0197">
    <property type="taxonomic scope" value="Bacteria"/>
</dbReference>
<dbReference type="HOGENOM" id="CLU_078858_2_1_10"/>
<dbReference type="InParanoid" id="Q8A483"/>
<dbReference type="OrthoDB" id="9802589at2"/>
<dbReference type="Proteomes" id="UP000001414">
    <property type="component" value="Chromosome"/>
</dbReference>
<dbReference type="GO" id="GO:0022625">
    <property type="term" value="C:cytosolic large ribosomal subunit"/>
    <property type="evidence" value="ECO:0000318"/>
    <property type="project" value="GO_Central"/>
</dbReference>
<dbReference type="GO" id="GO:0019843">
    <property type="term" value="F:rRNA binding"/>
    <property type="evidence" value="ECO:0000318"/>
    <property type="project" value="GO_Central"/>
</dbReference>
<dbReference type="GO" id="GO:0003735">
    <property type="term" value="F:structural constituent of ribosome"/>
    <property type="evidence" value="ECO:0000318"/>
    <property type="project" value="GO_Central"/>
</dbReference>
<dbReference type="GO" id="GO:0000049">
    <property type="term" value="F:tRNA binding"/>
    <property type="evidence" value="ECO:0007669"/>
    <property type="project" value="UniProtKB-KW"/>
</dbReference>
<dbReference type="GO" id="GO:0006412">
    <property type="term" value="P:translation"/>
    <property type="evidence" value="ECO:0007669"/>
    <property type="project" value="UniProtKB-UniRule"/>
</dbReference>
<dbReference type="CDD" id="cd01433">
    <property type="entry name" value="Ribosomal_L16_L10e"/>
    <property type="match status" value="1"/>
</dbReference>
<dbReference type="FunFam" id="3.90.1170.10:FF:000001">
    <property type="entry name" value="50S ribosomal protein L16"/>
    <property type="match status" value="1"/>
</dbReference>
<dbReference type="Gene3D" id="3.90.1170.10">
    <property type="entry name" value="Ribosomal protein L10e/L16"/>
    <property type="match status" value="1"/>
</dbReference>
<dbReference type="HAMAP" id="MF_01342">
    <property type="entry name" value="Ribosomal_uL16"/>
    <property type="match status" value="1"/>
</dbReference>
<dbReference type="InterPro" id="IPR047873">
    <property type="entry name" value="Ribosomal_uL16"/>
</dbReference>
<dbReference type="InterPro" id="IPR000114">
    <property type="entry name" value="Ribosomal_uL16_bact-type"/>
</dbReference>
<dbReference type="InterPro" id="IPR020798">
    <property type="entry name" value="Ribosomal_uL16_CS"/>
</dbReference>
<dbReference type="InterPro" id="IPR016180">
    <property type="entry name" value="Ribosomal_uL16_dom"/>
</dbReference>
<dbReference type="InterPro" id="IPR036920">
    <property type="entry name" value="Ribosomal_uL16_sf"/>
</dbReference>
<dbReference type="NCBIfam" id="TIGR01164">
    <property type="entry name" value="rplP_bact"/>
    <property type="match status" value="1"/>
</dbReference>
<dbReference type="PANTHER" id="PTHR12220">
    <property type="entry name" value="50S/60S RIBOSOMAL PROTEIN L16"/>
    <property type="match status" value="1"/>
</dbReference>
<dbReference type="PANTHER" id="PTHR12220:SF13">
    <property type="entry name" value="LARGE RIBOSOMAL SUBUNIT PROTEIN UL16M"/>
    <property type="match status" value="1"/>
</dbReference>
<dbReference type="Pfam" id="PF00252">
    <property type="entry name" value="Ribosomal_L16"/>
    <property type="match status" value="1"/>
</dbReference>
<dbReference type="PRINTS" id="PR00060">
    <property type="entry name" value="RIBOSOMALL16"/>
</dbReference>
<dbReference type="SUPFAM" id="SSF54686">
    <property type="entry name" value="Ribosomal protein L16p/L10e"/>
    <property type="match status" value="1"/>
</dbReference>
<dbReference type="PROSITE" id="PS00701">
    <property type="entry name" value="RIBOSOMAL_L16_2"/>
    <property type="match status" value="1"/>
</dbReference>
<comment type="function">
    <text evidence="1">Binds 23S rRNA and is also seen to make contacts with the A and possibly P site tRNAs.</text>
</comment>
<comment type="subunit">
    <text evidence="1">Part of the 50S ribosomal subunit.</text>
</comment>
<comment type="similarity">
    <text evidence="1">Belongs to the universal ribosomal protein uL16 family.</text>
</comment>
<keyword id="KW-1185">Reference proteome</keyword>
<keyword id="KW-0687">Ribonucleoprotein</keyword>
<keyword id="KW-0689">Ribosomal protein</keyword>
<keyword id="KW-0694">RNA-binding</keyword>
<keyword id="KW-0699">rRNA-binding</keyword>
<keyword id="KW-0820">tRNA-binding</keyword>
<proteinExistence type="inferred from homology"/>
<sequence>MLQPKKTKFRRQQKGRAKGNAQRGNQLAFGSFGIKALETKWITGRQIEAARIAVTRYMQRQGQIWIRIFPDKPITRKPADVRMGKGKGAPEGFVAPVTPGRIIIEAEGVSYEIAKEALRLAAQKLPITTKFVVRRDYDIQNQNA</sequence>
<gene>
    <name evidence="1" type="primary">rplP</name>
    <name type="ordered locus">BT_2720</name>
</gene>
<reference key="1">
    <citation type="journal article" date="2003" name="Science">
        <title>A genomic view of the human-Bacteroides thetaiotaomicron symbiosis.</title>
        <authorList>
            <person name="Xu J."/>
            <person name="Bjursell M.K."/>
            <person name="Himrod J."/>
            <person name="Deng S."/>
            <person name="Carmichael L.K."/>
            <person name="Chiang H.C."/>
            <person name="Hooper L.V."/>
            <person name="Gordon J.I."/>
        </authorList>
    </citation>
    <scope>NUCLEOTIDE SEQUENCE [LARGE SCALE GENOMIC DNA]</scope>
    <source>
        <strain>ATCC 29148 / DSM 2079 / JCM 5827 / CCUG 10774 / NCTC 10582 / VPI-5482 / E50</strain>
    </source>
</reference>